<feature type="chain" id="PRO_0000272790" description="Large ribosomal subunit protein uL23">
    <location>
        <begin position="1"/>
        <end position="100"/>
    </location>
</feature>
<evidence type="ECO:0000255" key="1">
    <source>
        <dbReference type="HAMAP-Rule" id="MF_01369"/>
    </source>
</evidence>
<evidence type="ECO:0000305" key="2"/>
<keyword id="KW-1185">Reference proteome</keyword>
<keyword id="KW-0687">Ribonucleoprotein</keyword>
<keyword id="KW-0689">Ribosomal protein</keyword>
<keyword id="KW-0694">RNA-binding</keyword>
<keyword id="KW-0699">rRNA-binding</keyword>
<reference key="1">
    <citation type="journal article" date="2001" name="Proc. Natl. Acad. Sci. U.S.A.">
        <title>Complete genomic sequence of Pasteurella multocida Pm70.</title>
        <authorList>
            <person name="May B.J."/>
            <person name="Zhang Q."/>
            <person name="Li L.L."/>
            <person name="Paustian M.L."/>
            <person name="Whittam T.S."/>
            <person name="Kapur V."/>
        </authorList>
    </citation>
    <scope>NUCLEOTIDE SEQUENCE [LARGE SCALE GENOMIC DNA]</scope>
    <source>
        <strain>Pm70</strain>
    </source>
</reference>
<dbReference type="EMBL" id="AE004439">
    <property type="protein sequence ID" value="AAK03497.1"/>
    <property type="molecule type" value="Genomic_DNA"/>
</dbReference>
<dbReference type="RefSeq" id="WP_005724030.1">
    <property type="nucleotide sequence ID" value="NC_002663.1"/>
</dbReference>
<dbReference type="SMR" id="Q9CL34"/>
<dbReference type="STRING" id="272843.PM1413"/>
<dbReference type="EnsemblBacteria" id="AAK03497">
    <property type="protein sequence ID" value="AAK03497"/>
    <property type="gene ID" value="PM1413"/>
</dbReference>
<dbReference type="GeneID" id="77207028"/>
<dbReference type="KEGG" id="pmu:PM1413"/>
<dbReference type="HOGENOM" id="CLU_037562_3_1_6"/>
<dbReference type="OrthoDB" id="9793353at2"/>
<dbReference type="Proteomes" id="UP000000809">
    <property type="component" value="Chromosome"/>
</dbReference>
<dbReference type="GO" id="GO:1990904">
    <property type="term" value="C:ribonucleoprotein complex"/>
    <property type="evidence" value="ECO:0007669"/>
    <property type="project" value="UniProtKB-KW"/>
</dbReference>
<dbReference type="GO" id="GO:0005840">
    <property type="term" value="C:ribosome"/>
    <property type="evidence" value="ECO:0007669"/>
    <property type="project" value="UniProtKB-KW"/>
</dbReference>
<dbReference type="GO" id="GO:0019843">
    <property type="term" value="F:rRNA binding"/>
    <property type="evidence" value="ECO:0007669"/>
    <property type="project" value="UniProtKB-UniRule"/>
</dbReference>
<dbReference type="GO" id="GO:0003735">
    <property type="term" value="F:structural constituent of ribosome"/>
    <property type="evidence" value="ECO:0007669"/>
    <property type="project" value="InterPro"/>
</dbReference>
<dbReference type="GO" id="GO:0006412">
    <property type="term" value="P:translation"/>
    <property type="evidence" value="ECO:0007669"/>
    <property type="project" value="UniProtKB-UniRule"/>
</dbReference>
<dbReference type="FunFam" id="3.30.70.330:FF:000001">
    <property type="entry name" value="50S ribosomal protein L23"/>
    <property type="match status" value="1"/>
</dbReference>
<dbReference type="Gene3D" id="3.30.70.330">
    <property type="match status" value="1"/>
</dbReference>
<dbReference type="HAMAP" id="MF_01369_B">
    <property type="entry name" value="Ribosomal_uL23_B"/>
    <property type="match status" value="1"/>
</dbReference>
<dbReference type="InterPro" id="IPR012677">
    <property type="entry name" value="Nucleotide-bd_a/b_plait_sf"/>
</dbReference>
<dbReference type="InterPro" id="IPR013025">
    <property type="entry name" value="Ribosomal_uL23-like"/>
</dbReference>
<dbReference type="InterPro" id="IPR012678">
    <property type="entry name" value="Ribosomal_uL23/eL15/eS24_sf"/>
</dbReference>
<dbReference type="InterPro" id="IPR001014">
    <property type="entry name" value="Ribosomal_uL23_CS"/>
</dbReference>
<dbReference type="NCBIfam" id="NF004358">
    <property type="entry name" value="PRK05738.1-1"/>
    <property type="match status" value="1"/>
</dbReference>
<dbReference type="NCBIfam" id="NF004359">
    <property type="entry name" value="PRK05738.1-3"/>
    <property type="match status" value="1"/>
</dbReference>
<dbReference type="NCBIfam" id="NF004363">
    <property type="entry name" value="PRK05738.2-4"/>
    <property type="match status" value="1"/>
</dbReference>
<dbReference type="NCBIfam" id="NF004366">
    <property type="entry name" value="PRK05738.3-2"/>
    <property type="match status" value="1"/>
</dbReference>
<dbReference type="PANTHER" id="PTHR11620">
    <property type="entry name" value="60S RIBOSOMAL PROTEIN L23A"/>
    <property type="match status" value="1"/>
</dbReference>
<dbReference type="Pfam" id="PF00276">
    <property type="entry name" value="Ribosomal_L23"/>
    <property type="match status" value="1"/>
</dbReference>
<dbReference type="SUPFAM" id="SSF54189">
    <property type="entry name" value="Ribosomal proteins S24e, L23 and L15e"/>
    <property type="match status" value="1"/>
</dbReference>
<dbReference type="PROSITE" id="PS00050">
    <property type="entry name" value="RIBOSOMAL_L23"/>
    <property type="match status" value="1"/>
</dbReference>
<accession>Q9CL34</accession>
<gene>
    <name evidence="1" type="primary">rplW</name>
    <name type="ordered locus">PM1413</name>
</gene>
<organism>
    <name type="scientific">Pasteurella multocida (strain Pm70)</name>
    <dbReference type="NCBI Taxonomy" id="272843"/>
    <lineage>
        <taxon>Bacteria</taxon>
        <taxon>Pseudomonadati</taxon>
        <taxon>Pseudomonadota</taxon>
        <taxon>Gammaproteobacteria</taxon>
        <taxon>Pasteurellales</taxon>
        <taxon>Pasteurellaceae</taxon>
        <taxon>Pasteurella</taxon>
    </lineage>
</organism>
<sequence>MIQQERLLKVLKAPHVSEKATNNAEKSNTIVFKVALDANKVEIANAVEQLFEVKVDSVRTVVVKGKTKRHGARMGRRSDWKKAYVTLQEGQSLDFVEGAE</sequence>
<proteinExistence type="inferred from homology"/>
<protein>
    <recommendedName>
        <fullName evidence="1">Large ribosomal subunit protein uL23</fullName>
    </recommendedName>
    <alternativeName>
        <fullName evidence="2">50S ribosomal protein L23</fullName>
    </alternativeName>
</protein>
<comment type="function">
    <text evidence="1">One of the early assembly proteins it binds 23S rRNA. One of the proteins that surrounds the polypeptide exit tunnel on the outside of the ribosome. Forms the main docking site for trigger factor binding to the ribosome.</text>
</comment>
<comment type="subunit">
    <text evidence="1">Part of the 50S ribosomal subunit. Contacts protein L29, and trigger factor when it is bound to the ribosome.</text>
</comment>
<comment type="similarity">
    <text evidence="1">Belongs to the universal ribosomal protein uL23 family.</text>
</comment>
<name>RL23_PASMU</name>